<sequence length="452" mass="50448">MDDCIAAISSATGEAGIGIVRMTGEGCADVLDSVFKRANDKADFINRKMTYGHIVDDNEIVDEVLVCYMKAPHTYTREDVVEIYTHGGVVAVRKVLEVLLNNGARLAEAGEFTKRAFLNGRIDLSQAEAIIDMIKAKTDKAYSVSMKQLEGSVNRNIKQLRDKLLDMLSHVEYSINFTEDMQDELDNTPVLNEGKEVLDKLKKLSESANRGRIIRDGINTTIIGKPNVGKSSLLNALLKENRAIVTDIPGTTRDVIEEYIDLDGISLKINDTAGIRDTEDIVEKIGVEKSVSFISDSDLIIAIFDSSREFDDEDRKILDLIRDKKSIVLLNKIDLDGEFDVDENLEGIEVIHTSIKNNEGIEDLENKIIEMFNDGYIEANNDNIITNIRHRDIINKAIKSLESSLHDMEAGVPIDCFEVDLRNAWEILGEITGETVDDDVLNKIFSDFCIGK</sequence>
<keyword id="KW-0963">Cytoplasm</keyword>
<keyword id="KW-0342">GTP-binding</keyword>
<keyword id="KW-0378">Hydrolase</keyword>
<keyword id="KW-0460">Magnesium</keyword>
<keyword id="KW-0479">Metal-binding</keyword>
<keyword id="KW-0547">Nucleotide-binding</keyword>
<keyword id="KW-0630">Potassium</keyword>
<keyword id="KW-1185">Reference proteome</keyword>
<keyword id="KW-0819">tRNA processing</keyword>
<feature type="chain" id="PRO_0000345786" description="tRNA modification GTPase MnmE">
    <location>
        <begin position="1"/>
        <end position="452"/>
    </location>
</feature>
<feature type="domain" description="TrmE-type G">
    <location>
        <begin position="217"/>
        <end position="373"/>
    </location>
</feature>
<feature type="binding site" evidence="1">
    <location>
        <position position="21"/>
    </location>
    <ligand>
        <name>(6S)-5-formyl-5,6,7,8-tetrahydrofolate</name>
        <dbReference type="ChEBI" id="CHEBI:57457"/>
    </ligand>
</feature>
<feature type="binding site" evidence="1">
    <location>
        <position position="82"/>
    </location>
    <ligand>
        <name>(6S)-5-formyl-5,6,7,8-tetrahydrofolate</name>
        <dbReference type="ChEBI" id="CHEBI:57457"/>
    </ligand>
</feature>
<feature type="binding site" evidence="1">
    <location>
        <position position="121"/>
    </location>
    <ligand>
        <name>(6S)-5-formyl-5,6,7,8-tetrahydrofolate</name>
        <dbReference type="ChEBI" id="CHEBI:57457"/>
    </ligand>
</feature>
<feature type="binding site" evidence="1">
    <location>
        <begin position="227"/>
        <end position="232"/>
    </location>
    <ligand>
        <name>GTP</name>
        <dbReference type="ChEBI" id="CHEBI:37565"/>
    </ligand>
</feature>
<feature type="binding site" evidence="1">
    <location>
        <position position="227"/>
    </location>
    <ligand>
        <name>K(+)</name>
        <dbReference type="ChEBI" id="CHEBI:29103"/>
    </ligand>
</feature>
<feature type="binding site" evidence="1">
    <location>
        <position position="231"/>
    </location>
    <ligand>
        <name>Mg(2+)</name>
        <dbReference type="ChEBI" id="CHEBI:18420"/>
    </ligand>
</feature>
<feature type="binding site" evidence="1">
    <location>
        <begin position="246"/>
        <end position="252"/>
    </location>
    <ligand>
        <name>GTP</name>
        <dbReference type="ChEBI" id="CHEBI:37565"/>
    </ligand>
</feature>
<feature type="binding site" evidence="1">
    <location>
        <position position="246"/>
    </location>
    <ligand>
        <name>K(+)</name>
        <dbReference type="ChEBI" id="CHEBI:29103"/>
    </ligand>
</feature>
<feature type="binding site" evidence="1">
    <location>
        <position position="248"/>
    </location>
    <ligand>
        <name>K(+)</name>
        <dbReference type="ChEBI" id="CHEBI:29103"/>
    </ligand>
</feature>
<feature type="binding site" evidence="1">
    <location>
        <position position="251"/>
    </location>
    <ligand>
        <name>K(+)</name>
        <dbReference type="ChEBI" id="CHEBI:29103"/>
    </ligand>
</feature>
<feature type="binding site" evidence="1">
    <location>
        <position position="252"/>
    </location>
    <ligand>
        <name>Mg(2+)</name>
        <dbReference type="ChEBI" id="CHEBI:18420"/>
    </ligand>
</feature>
<feature type="binding site" evidence="1">
    <location>
        <begin position="271"/>
        <end position="274"/>
    </location>
    <ligand>
        <name>GTP</name>
        <dbReference type="ChEBI" id="CHEBI:37565"/>
    </ligand>
</feature>
<feature type="binding site" evidence="1">
    <location>
        <position position="452"/>
    </location>
    <ligand>
        <name>(6S)-5-formyl-5,6,7,8-tetrahydrofolate</name>
        <dbReference type="ChEBI" id="CHEBI:57457"/>
    </ligand>
</feature>
<reference key="1">
    <citation type="journal article" date="2008" name="DNA Res.">
        <title>Complete genome sequence of Finegoldia magna, an anaerobic opportunistic pathogen.</title>
        <authorList>
            <person name="Goto T."/>
            <person name="Yamashita A."/>
            <person name="Hirakawa H."/>
            <person name="Matsutani M."/>
            <person name="Todo K."/>
            <person name="Ohshima K."/>
            <person name="Toh H."/>
            <person name="Miyamoto K."/>
            <person name="Kuhara S."/>
            <person name="Hattori M."/>
            <person name="Shimizu T."/>
            <person name="Akimoto S."/>
        </authorList>
    </citation>
    <scope>NUCLEOTIDE SEQUENCE [LARGE SCALE GENOMIC DNA]</scope>
    <source>
        <strain>ATCC 29328 / DSM 20472 / WAL 2508</strain>
    </source>
</reference>
<gene>
    <name evidence="1" type="primary">mnmE</name>
    <name evidence="1" type="synonym">trmE</name>
    <name type="ordered locus">FMG_1624</name>
</gene>
<protein>
    <recommendedName>
        <fullName evidence="1">tRNA modification GTPase MnmE</fullName>
        <ecNumber evidence="1">3.6.-.-</ecNumber>
    </recommendedName>
</protein>
<accession>B0S3V2</accession>
<organism>
    <name type="scientific">Finegoldia magna (strain ATCC 29328 / DSM 20472 / WAL 2508)</name>
    <name type="common">Peptostreptococcus magnus</name>
    <dbReference type="NCBI Taxonomy" id="334413"/>
    <lineage>
        <taxon>Bacteria</taxon>
        <taxon>Bacillati</taxon>
        <taxon>Bacillota</taxon>
        <taxon>Tissierellia</taxon>
        <taxon>Tissierellales</taxon>
        <taxon>Peptoniphilaceae</taxon>
        <taxon>Finegoldia</taxon>
    </lineage>
</organism>
<dbReference type="EC" id="3.6.-.-" evidence="1"/>
<dbReference type="EMBL" id="AP008971">
    <property type="protein sequence ID" value="BAG09042.1"/>
    <property type="molecule type" value="Genomic_DNA"/>
</dbReference>
<dbReference type="RefSeq" id="WP_012291241.1">
    <property type="nucleotide sequence ID" value="NC_010376.1"/>
</dbReference>
<dbReference type="SMR" id="B0S3V2"/>
<dbReference type="STRING" id="334413.FMG_1624"/>
<dbReference type="KEGG" id="fma:FMG_1624"/>
<dbReference type="eggNOG" id="COG0486">
    <property type="taxonomic scope" value="Bacteria"/>
</dbReference>
<dbReference type="HOGENOM" id="CLU_019624_4_1_9"/>
<dbReference type="Proteomes" id="UP000001319">
    <property type="component" value="Chromosome"/>
</dbReference>
<dbReference type="GO" id="GO:0005829">
    <property type="term" value="C:cytosol"/>
    <property type="evidence" value="ECO:0007669"/>
    <property type="project" value="TreeGrafter"/>
</dbReference>
<dbReference type="GO" id="GO:0005525">
    <property type="term" value="F:GTP binding"/>
    <property type="evidence" value="ECO:0007669"/>
    <property type="project" value="UniProtKB-UniRule"/>
</dbReference>
<dbReference type="GO" id="GO:0003924">
    <property type="term" value="F:GTPase activity"/>
    <property type="evidence" value="ECO:0007669"/>
    <property type="project" value="UniProtKB-UniRule"/>
</dbReference>
<dbReference type="GO" id="GO:0046872">
    <property type="term" value="F:metal ion binding"/>
    <property type="evidence" value="ECO:0007669"/>
    <property type="project" value="UniProtKB-KW"/>
</dbReference>
<dbReference type="GO" id="GO:0030488">
    <property type="term" value="P:tRNA methylation"/>
    <property type="evidence" value="ECO:0007669"/>
    <property type="project" value="TreeGrafter"/>
</dbReference>
<dbReference type="GO" id="GO:0002098">
    <property type="term" value="P:tRNA wobble uridine modification"/>
    <property type="evidence" value="ECO:0007669"/>
    <property type="project" value="TreeGrafter"/>
</dbReference>
<dbReference type="CDD" id="cd04164">
    <property type="entry name" value="trmE"/>
    <property type="match status" value="1"/>
</dbReference>
<dbReference type="CDD" id="cd14858">
    <property type="entry name" value="TrmE_N"/>
    <property type="match status" value="1"/>
</dbReference>
<dbReference type="FunFam" id="3.30.1360.120:FF:000003">
    <property type="entry name" value="tRNA modification GTPase MnmE"/>
    <property type="match status" value="1"/>
</dbReference>
<dbReference type="FunFam" id="3.40.50.300:FF:000494">
    <property type="entry name" value="tRNA modification GTPase MnmE"/>
    <property type="match status" value="1"/>
</dbReference>
<dbReference type="Gene3D" id="3.40.50.300">
    <property type="entry name" value="P-loop containing nucleotide triphosphate hydrolases"/>
    <property type="match status" value="1"/>
</dbReference>
<dbReference type="Gene3D" id="3.30.1360.120">
    <property type="entry name" value="Probable tRNA modification gtpase trme, domain 1"/>
    <property type="match status" value="1"/>
</dbReference>
<dbReference type="Gene3D" id="1.20.120.430">
    <property type="entry name" value="tRNA modification GTPase MnmE domain 2"/>
    <property type="match status" value="1"/>
</dbReference>
<dbReference type="HAMAP" id="MF_00379">
    <property type="entry name" value="GTPase_MnmE"/>
    <property type="match status" value="1"/>
</dbReference>
<dbReference type="InterPro" id="IPR031168">
    <property type="entry name" value="G_TrmE"/>
</dbReference>
<dbReference type="InterPro" id="IPR006073">
    <property type="entry name" value="GTP-bd"/>
</dbReference>
<dbReference type="InterPro" id="IPR018948">
    <property type="entry name" value="GTP-bd_TrmE_N"/>
</dbReference>
<dbReference type="InterPro" id="IPR004520">
    <property type="entry name" value="GTPase_MnmE"/>
</dbReference>
<dbReference type="InterPro" id="IPR027368">
    <property type="entry name" value="MnmE_dom2"/>
</dbReference>
<dbReference type="InterPro" id="IPR025867">
    <property type="entry name" value="MnmE_helical"/>
</dbReference>
<dbReference type="InterPro" id="IPR027417">
    <property type="entry name" value="P-loop_NTPase"/>
</dbReference>
<dbReference type="InterPro" id="IPR005225">
    <property type="entry name" value="Small_GTP-bd"/>
</dbReference>
<dbReference type="InterPro" id="IPR027266">
    <property type="entry name" value="TrmE/GcvT_dom1"/>
</dbReference>
<dbReference type="NCBIfam" id="TIGR00450">
    <property type="entry name" value="mnmE_trmE_thdF"/>
    <property type="match status" value="1"/>
</dbReference>
<dbReference type="NCBIfam" id="NF003661">
    <property type="entry name" value="PRK05291.1-3"/>
    <property type="match status" value="1"/>
</dbReference>
<dbReference type="NCBIfam" id="TIGR00231">
    <property type="entry name" value="small_GTP"/>
    <property type="match status" value="1"/>
</dbReference>
<dbReference type="PANTHER" id="PTHR42714">
    <property type="entry name" value="TRNA MODIFICATION GTPASE GTPBP3"/>
    <property type="match status" value="1"/>
</dbReference>
<dbReference type="PANTHER" id="PTHR42714:SF2">
    <property type="entry name" value="TRNA MODIFICATION GTPASE GTPBP3, MITOCHONDRIAL"/>
    <property type="match status" value="1"/>
</dbReference>
<dbReference type="Pfam" id="PF01926">
    <property type="entry name" value="MMR_HSR1"/>
    <property type="match status" value="1"/>
</dbReference>
<dbReference type="Pfam" id="PF12631">
    <property type="entry name" value="MnmE_helical"/>
    <property type="match status" value="1"/>
</dbReference>
<dbReference type="Pfam" id="PF10396">
    <property type="entry name" value="TrmE_N"/>
    <property type="match status" value="1"/>
</dbReference>
<dbReference type="SUPFAM" id="SSF52540">
    <property type="entry name" value="P-loop containing nucleoside triphosphate hydrolases"/>
    <property type="match status" value="1"/>
</dbReference>
<dbReference type="SUPFAM" id="SSF116878">
    <property type="entry name" value="TrmE connector domain"/>
    <property type="match status" value="1"/>
</dbReference>
<dbReference type="PROSITE" id="PS51709">
    <property type="entry name" value="G_TRME"/>
    <property type="match status" value="1"/>
</dbReference>
<name>MNME_FINM2</name>
<comment type="function">
    <text evidence="1">Exhibits a very high intrinsic GTPase hydrolysis rate. Involved in the addition of a carboxymethylaminomethyl (cmnm) group at the wobble position (U34) of certain tRNAs, forming tRNA-cmnm(5)s(2)U34.</text>
</comment>
<comment type="cofactor">
    <cofactor evidence="1">
        <name>K(+)</name>
        <dbReference type="ChEBI" id="CHEBI:29103"/>
    </cofactor>
    <text evidence="1">Binds 1 potassium ion per subunit.</text>
</comment>
<comment type="subunit">
    <text evidence="1">Homodimer. Heterotetramer of two MnmE and two MnmG subunits.</text>
</comment>
<comment type="subcellular location">
    <subcellularLocation>
        <location evidence="1">Cytoplasm</location>
    </subcellularLocation>
</comment>
<comment type="similarity">
    <text evidence="1">Belongs to the TRAFAC class TrmE-Era-EngA-EngB-Septin-like GTPase superfamily. TrmE GTPase family.</text>
</comment>
<proteinExistence type="inferred from homology"/>
<evidence type="ECO:0000255" key="1">
    <source>
        <dbReference type="HAMAP-Rule" id="MF_00379"/>
    </source>
</evidence>